<sequence>MTAIAPVITIDGPSGAGKGTLCKAMAEALQWHLLDSGAIYRVLALAALHHHVDVASEDALVPLASHLDVRFVSTNGNLEVILEGEDVSGEIRTQEVANAASQVAAFPRVREALLRRQRAFRELPGLIADGRDMGTVVFPDAPVKIFLDASSEERAHRRMLQLQEKGFSVNFERLLAEIKERDDRDRNRAVAPLVPASDALVLDSTTLSIEQVIEKALQYARQKLALA</sequence>
<proteinExistence type="inferred from homology"/>
<evidence type="ECO:0000255" key="1">
    <source>
        <dbReference type="HAMAP-Rule" id="MF_00238"/>
    </source>
</evidence>
<feature type="chain" id="PRO_1000048285" description="Cytidylate kinase">
    <location>
        <begin position="1"/>
        <end position="227"/>
    </location>
</feature>
<feature type="binding site" evidence="1">
    <location>
        <begin position="12"/>
        <end position="20"/>
    </location>
    <ligand>
        <name>ATP</name>
        <dbReference type="ChEBI" id="CHEBI:30616"/>
    </ligand>
</feature>
<comment type="catalytic activity">
    <reaction evidence="1">
        <text>CMP + ATP = CDP + ADP</text>
        <dbReference type="Rhea" id="RHEA:11600"/>
        <dbReference type="ChEBI" id="CHEBI:30616"/>
        <dbReference type="ChEBI" id="CHEBI:58069"/>
        <dbReference type="ChEBI" id="CHEBI:60377"/>
        <dbReference type="ChEBI" id="CHEBI:456216"/>
        <dbReference type="EC" id="2.7.4.25"/>
    </reaction>
</comment>
<comment type="catalytic activity">
    <reaction evidence="1">
        <text>dCMP + ATP = dCDP + ADP</text>
        <dbReference type="Rhea" id="RHEA:25094"/>
        <dbReference type="ChEBI" id="CHEBI:30616"/>
        <dbReference type="ChEBI" id="CHEBI:57566"/>
        <dbReference type="ChEBI" id="CHEBI:58593"/>
        <dbReference type="ChEBI" id="CHEBI:456216"/>
        <dbReference type="EC" id="2.7.4.25"/>
    </reaction>
</comment>
<comment type="subcellular location">
    <subcellularLocation>
        <location evidence="1">Cytoplasm</location>
    </subcellularLocation>
</comment>
<comment type="similarity">
    <text evidence="1">Belongs to the cytidylate kinase family. Type 1 subfamily.</text>
</comment>
<name>KCY_SHISS</name>
<keyword id="KW-0067">ATP-binding</keyword>
<keyword id="KW-0963">Cytoplasm</keyword>
<keyword id="KW-0418">Kinase</keyword>
<keyword id="KW-0547">Nucleotide-binding</keyword>
<keyword id="KW-1185">Reference proteome</keyword>
<keyword id="KW-0808">Transferase</keyword>
<reference key="1">
    <citation type="journal article" date="2005" name="Nucleic Acids Res.">
        <title>Genome dynamics and diversity of Shigella species, the etiologic agents of bacillary dysentery.</title>
        <authorList>
            <person name="Yang F."/>
            <person name="Yang J."/>
            <person name="Zhang X."/>
            <person name="Chen L."/>
            <person name="Jiang Y."/>
            <person name="Yan Y."/>
            <person name="Tang X."/>
            <person name="Wang J."/>
            <person name="Xiong Z."/>
            <person name="Dong J."/>
            <person name="Xue Y."/>
            <person name="Zhu Y."/>
            <person name="Xu X."/>
            <person name="Sun L."/>
            <person name="Chen S."/>
            <person name="Nie H."/>
            <person name="Peng J."/>
            <person name="Xu J."/>
            <person name="Wang Y."/>
            <person name="Yuan Z."/>
            <person name="Wen Y."/>
            <person name="Yao Z."/>
            <person name="Shen Y."/>
            <person name="Qiang B."/>
            <person name="Hou Y."/>
            <person name="Yu J."/>
            <person name="Jin Q."/>
        </authorList>
    </citation>
    <scope>NUCLEOTIDE SEQUENCE [LARGE SCALE GENOMIC DNA]</scope>
    <source>
        <strain>Ss046</strain>
    </source>
</reference>
<protein>
    <recommendedName>
        <fullName evidence="1">Cytidylate kinase</fullName>
        <shortName evidence="1">CK</shortName>
        <ecNumber evidence="1">2.7.4.25</ecNumber>
    </recommendedName>
    <alternativeName>
        <fullName evidence="1">Cytidine monophosphate kinase</fullName>
        <shortName evidence="1">CMP kinase</shortName>
    </alternativeName>
</protein>
<gene>
    <name evidence="1" type="primary">cmk</name>
    <name type="ordered locus">SSON_0912</name>
</gene>
<accession>Q3Z3L1</accession>
<dbReference type="EC" id="2.7.4.25" evidence="1"/>
<dbReference type="EMBL" id="CP000038">
    <property type="protein sequence ID" value="AAZ87651.1"/>
    <property type="molecule type" value="Genomic_DNA"/>
</dbReference>
<dbReference type="RefSeq" id="WP_000125017.1">
    <property type="nucleotide sequence ID" value="NC_007384.1"/>
</dbReference>
<dbReference type="SMR" id="Q3Z3L1"/>
<dbReference type="KEGG" id="ssn:SSON_0912"/>
<dbReference type="HOGENOM" id="CLU_079959_0_2_6"/>
<dbReference type="Proteomes" id="UP000002529">
    <property type="component" value="Chromosome"/>
</dbReference>
<dbReference type="GO" id="GO:0005829">
    <property type="term" value="C:cytosol"/>
    <property type="evidence" value="ECO:0007669"/>
    <property type="project" value="TreeGrafter"/>
</dbReference>
<dbReference type="GO" id="GO:0005524">
    <property type="term" value="F:ATP binding"/>
    <property type="evidence" value="ECO:0007669"/>
    <property type="project" value="UniProtKB-UniRule"/>
</dbReference>
<dbReference type="GO" id="GO:0036430">
    <property type="term" value="F:CMP kinase activity"/>
    <property type="evidence" value="ECO:0007669"/>
    <property type="project" value="RHEA"/>
</dbReference>
<dbReference type="GO" id="GO:0036431">
    <property type="term" value="F:dCMP kinase activity"/>
    <property type="evidence" value="ECO:0007669"/>
    <property type="project" value="RHEA"/>
</dbReference>
<dbReference type="GO" id="GO:0015949">
    <property type="term" value="P:nucleobase-containing small molecule interconversion"/>
    <property type="evidence" value="ECO:0007669"/>
    <property type="project" value="TreeGrafter"/>
</dbReference>
<dbReference type="GO" id="GO:0006220">
    <property type="term" value="P:pyrimidine nucleotide metabolic process"/>
    <property type="evidence" value="ECO:0007669"/>
    <property type="project" value="UniProtKB-UniRule"/>
</dbReference>
<dbReference type="CDD" id="cd02020">
    <property type="entry name" value="CMPK"/>
    <property type="match status" value="1"/>
</dbReference>
<dbReference type="FunFam" id="3.40.50.300:FF:000262">
    <property type="entry name" value="Cytidylate kinase"/>
    <property type="match status" value="1"/>
</dbReference>
<dbReference type="Gene3D" id="3.40.50.300">
    <property type="entry name" value="P-loop containing nucleotide triphosphate hydrolases"/>
    <property type="match status" value="1"/>
</dbReference>
<dbReference type="HAMAP" id="MF_00238">
    <property type="entry name" value="Cytidyl_kinase_type1"/>
    <property type="match status" value="1"/>
</dbReference>
<dbReference type="InterPro" id="IPR003136">
    <property type="entry name" value="Cytidylate_kin"/>
</dbReference>
<dbReference type="InterPro" id="IPR011994">
    <property type="entry name" value="Cytidylate_kinase_dom"/>
</dbReference>
<dbReference type="InterPro" id="IPR027417">
    <property type="entry name" value="P-loop_NTPase"/>
</dbReference>
<dbReference type="NCBIfam" id="TIGR00017">
    <property type="entry name" value="cmk"/>
    <property type="match status" value="1"/>
</dbReference>
<dbReference type="PANTHER" id="PTHR21299:SF2">
    <property type="entry name" value="CYTIDYLATE KINASE"/>
    <property type="match status" value="1"/>
</dbReference>
<dbReference type="PANTHER" id="PTHR21299">
    <property type="entry name" value="CYTIDYLATE KINASE/PANTOATE-BETA-ALANINE LIGASE"/>
    <property type="match status" value="1"/>
</dbReference>
<dbReference type="Pfam" id="PF02224">
    <property type="entry name" value="Cytidylate_kin"/>
    <property type="match status" value="1"/>
</dbReference>
<dbReference type="SUPFAM" id="SSF52540">
    <property type="entry name" value="P-loop containing nucleoside triphosphate hydrolases"/>
    <property type="match status" value="1"/>
</dbReference>
<organism>
    <name type="scientific">Shigella sonnei (strain Ss046)</name>
    <dbReference type="NCBI Taxonomy" id="300269"/>
    <lineage>
        <taxon>Bacteria</taxon>
        <taxon>Pseudomonadati</taxon>
        <taxon>Pseudomonadota</taxon>
        <taxon>Gammaproteobacteria</taxon>
        <taxon>Enterobacterales</taxon>
        <taxon>Enterobacteriaceae</taxon>
        <taxon>Shigella</taxon>
    </lineage>
</organism>